<evidence type="ECO:0000255" key="1">
    <source>
        <dbReference type="HAMAP-Rule" id="MF_01318"/>
    </source>
</evidence>
<evidence type="ECO:0000305" key="2"/>
<organism>
    <name type="scientific">Methylorubrum extorquens (strain PA1)</name>
    <name type="common">Methylobacterium extorquens</name>
    <dbReference type="NCBI Taxonomy" id="419610"/>
    <lineage>
        <taxon>Bacteria</taxon>
        <taxon>Pseudomonadati</taxon>
        <taxon>Pseudomonadota</taxon>
        <taxon>Alphaproteobacteria</taxon>
        <taxon>Hyphomicrobiales</taxon>
        <taxon>Methylobacteriaceae</taxon>
        <taxon>Methylorubrum</taxon>
    </lineage>
</organism>
<proteinExistence type="inferred from homology"/>
<feature type="chain" id="PRO_1000141426" description="Large ribosomal subunit protein uL1">
    <location>
        <begin position="1"/>
        <end position="232"/>
    </location>
</feature>
<accession>A9W8M1</accession>
<protein>
    <recommendedName>
        <fullName evidence="1">Large ribosomal subunit protein uL1</fullName>
    </recommendedName>
    <alternativeName>
        <fullName evidence="2">50S ribosomal protein L1</fullName>
    </alternativeName>
</protein>
<dbReference type="EMBL" id="CP000908">
    <property type="protein sequence ID" value="ABY32370.1"/>
    <property type="molecule type" value="Genomic_DNA"/>
</dbReference>
<dbReference type="RefSeq" id="WP_003597509.1">
    <property type="nucleotide sequence ID" value="NC_010172.1"/>
</dbReference>
<dbReference type="SMR" id="A9W8M1"/>
<dbReference type="GeneID" id="72991717"/>
<dbReference type="KEGG" id="mex:Mext_3999"/>
<dbReference type="eggNOG" id="COG0081">
    <property type="taxonomic scope" value="Bacteria"/>
</dbReference>
<dbReference type="HOGENOM" id="CLU_062853_0_0_5"/>
<dbReference type="BioCyc" id="MEXT419610:MEXT_RS20085-MONOMER"/>
<dbReference type="GO" id="GO:0022625">
    <property type="term" value="C:cytosolic large ribosomal subunit"/>
    <property type="evidence" value="ECO:0007669"/>
    <property type="project" value="TreeGrafter"/>
</dbReference>
<dbReference type="GO" id="GO:0019843">
    <property type="term" value="F:rRNA binding"/>
    <property type="evidence" value="ECO:0007669"/>
    <property type="project" value="UniProtKB-UniRule"/>
</dbReference>
<dbReference type="GO" id="GO:0003735">
    <property type="term" value="F:structural constituent of ribosome"/>
    <property type="evidence" value="ECO:0007669"/>
    <property type="project" value="InterPro"/>
</dbReference>
<dbReference type="GO" id="GO:0000049">
    <property type="term" value="F:tRNA binding"/>
    <property type="evidence" value="ECO:0007669"/>
    <property type="project" value="UniProtKB-KW"/>
</dbReference>
<dbReference type="GO" id="GO:0006417">
    <property type="term" value="P:regulation of translation"/>
    <property type="evidence" value="ECO:0007669"/>
    <property type="project" value="UniProtKB-KW"/>
</dbReference>
<dbReference type="GO" id="GO:0006412">
    <property type="term" value="P:translation"/>
    <property type="evidence" value="ECO:0007669"/>
    <property type="project" value="UniProtKB-UniRule"/>
</dbReference>
<dbReference type="CDD" id="cd00403">
    <property type="entry name" value="Ribosomal_L1"/>
    <property type="match status" value="1"/>
</dbReference>
<dbReference type="FunFam" id="3.40.50.790:FF:000001">
    <property type="entry name" value="50S ribosomal protein L1"/>
    <property type="match status" value="1"/>
</dbReference>
<dbReference type="Gene3D" id="3.30.190.20">
    <property type="match status" value="1"/>
</dbReference>
<dbReference type="Gene3D" id="3.40.50.790">
    <property type="match status" value="1"/>
</dbReference>
<dbReference type="HAMAP" id="MF_01318_B">
    <property type="entry name" value="Ribosomal_uL1_B"/>
    <property type="match status" value="1"/>
</dbReference>
<dbReference type="InterPro" id="IPR005878">
    <property type="entry name" value="Ribosom_uL1_bac-type"/>
</dbReference>
<dbReference type="InterPro" id="IPR002143">
    <property type="entry name" value="Ribosomal_uL1"/>
</dbReference>
<dbReference type="InterPro" id="IPR023674">
    <property type="entry name" value="Ribosomal_uL1-like"/>
</dbReference>
<dbReference type="InterPro" id="IPR028364">
    <property type="entry name" value="Ribosomal_uL1/biogenesis"/>
</dbReference>
<dbReference type="InterPro" id="IPR016095">
    <property type="entry name" value="Ribosomal_uL1_3-a/b-sand"/>
</dbReference>
<dbReference type="InterPro" id="IPR023673">
    <property type="entry name" value="Ribosomal_uL1_CS"/>
</dbReference>
<dbReference type="NCBIfam" id="TIGR01169">
    <property type="entry name" value="rplA_bact"/>
    <property type="match status" value="1"/>
</dbReference>
<dbReference type="PANTHER" id="PTHR36427">
    <property type="entry name" value="54S RIBOSOMAL PROTEIN L1, MITOCHONDRIAL"/>
    <property type="match status" value="1"/>
</dbReference>
<dbReference type="PANTHER" id="PTHR36427:SF3">
    <property type="entry name" value="LARGE RIBOSOMAL SUBUNIT PROTEIN UL1M"/>
    <property type="match status" value="1"/>
</dbReference>
<dbReference type="Pfam" id="PF00687">
    <property type="entry name" value="Ribosomal_L1"/>
    <property type="match status" value="1"/>
</dbReference>
<dbReference type="PIRSF" id="PIRSF002155">
    <property type="entry name" value="Ribosomal_L1"/>
    <property type="match status" value="1"/>
</dbReference>
<dbReference type="SUPFAM" id="SSF56808">
    <property type="entry name" value="Ribosomal protein L1"/>
    <property type="match status" value="1"/>
</dbReference>
<dbReference type="PROSITE" id="PS01199">
    <property type="entry name" value="RIBOSOMAL_L1"/>
    <property type="match status" value="1"/>
</dbReference>
<comment type="function">
    <text evidence="1">Binds directly to 23S rRNA. The L1 stalk is quite mobile in the ribosome, and is involved in E site tRNA release.</text>
</comment>
<comment type="function">
    <text evidence="1">Protein L1 is also a translational repressor protein, it controls the translation of the L11 operon by binding to its mRNA.</text>
</comment>
<comment type="subunit">
    <text evidence="1">Part of the 50S ribosomal subunit.</text>
</comment>
<comment type="similarity">
    <text evidence="1">Belongs to the universal ribosomal protein uL1 family.</text>
</comment>
<reference key="1">
    <citation type="submission" date="2007-12" db="EMBL/GenBank/DDBJ databases">
        <title>Complete sequence of Methylobacterium extorquens PA1.</title>
        <authorList>
            <consortium name="US DOE Joint Genome Institute"/>
            <person name="Copeland A."/>
            <person name="Lucas S."/>
            <person name="Lapidus A."/>
            <person name="Barry K."/>
            <person name="Glavina del Rio T."/>
            <person name="Dalin E."/>
            <person name="Tice H."/>
            <person name="Pitluck S."/>
            <person name="Saunders E."/>
            <person name="Brettin T."/>
            <person name="Bruce D."/>
            <person name="Detter J.C."/>
            <person name="Han C."/>
            <person name="Schmutz J."/>
            <person name="Larimer F."/>
            <person name="Land M."/>
            <person name="Hauser L."/>
            <person name="Kyrpides N."/>
            <person name="Kim E."/>
            <person name="Marx C."/>
            <person name="Richardson P."/>
        </authorList>
    </citation>
    <scope>NUCLEOTIDE SEQUENCE [LARGE SCALE GENOMIC DNA]</scope>
    <source>
        <strain>PA1</strain>
    </source>
</reference>
<gene>
    <name evidence="1" type="primary">rplA</name>
    <name type="ordered locus">Mext_3999</name>
</gene>
<sequence>MAREGKRIRAAREGLEPMKLYAIDEAIKLVKSKASAKFDETVEISMNLGVDPRHADQMVRGVCNLPNGSGRTVRVAVFARGAKADDARAAGADIVGAEDLLEIVQGGKIEFDRCIATPDLMPLVGRLGKVLGPRGLMPNPKVGTVTMDVKGAVAAAKGGAVEFRVEKAGIIHAGVGKVSFDEQKLVENIKAFADAVAKAKPTGAKGTYIQRIAVTSTMGPGVKVEPSTVLTA</sequence>
<keyword id="KW-0678">Repressor</keyword>
<keyword id="KW-0687">Ribonucleoprotein</keyword>
<keyword id="KW-0689">Ribosomal protein</keyword>
<keyword id="KW-0694">RNA-binding</keyword>
<keyword id="KW-0699">rRNA-binding</keyword>
<keyword id="KW-0810">Translation regulation</keyword>
<keyword id="KW-0820">tRNA-binding</keyword>
<name>RL1_METEP</name>